<name>PSTB_THEVB</name>
<accession>Q8DGZ3</accession>
<reference key="1">
    <citation type="journal article" date="2002" name="DNA Res.">
        <title>Complete genome structure of the thermophilic cyanobacterium Thermosynechococcus elongatus BP-1.</title>
        <authorList>
            <person name="Nakamura Y."/>
            <person name="Kaneko T."/>
            <person name="Sato S."/>
            <person name="Ikeuchi M."/>
            <person name="Katoh H."/>
            <person name="Sasamoto S."/>
            <person name="Watanabe A."/>
            <person name="Iriguchi M."/>
            <person name="Kawashima K."/>
            <person name="Kimura T."/>
            <person name="Kishida Y."/>
            <person name="Kiyokawa C."/>
            <person name="Kohara M."/>
            <person name="Matsumoto M."/>
            <person name="Matsuno A."/>
            <person name="Nakazaki N."/>
            <person name="Shimpo S."/>
            <person name="Sugimoto M."/>
            <person name="Takeuchi C."/>
            <person name="Yamada M."/>
            <person name="Tabata S."/>
        </authorList>
    </citation>
    <scope>NUCLEOTIDE SEQUENCE [LARGE SCALE GENOMIC DNA]</scope>
    <source>
        <strain>NIES-2133 / IAM M-273 / BP-1</strain>
    </source>
</reference>
<protein>
    <recommendedName>
        <fullName evidence="1">Phosphate import ATP-binding protein PstB</fullName>
        <ecNumber evidence="1">7.3.2.1</ecNumber>
    </recommendedName>
    <alternativeName>
        <fullName evidence="1">ABC phosphate transporter</fullName>
    </alternativeName>
    <alternativeName>
        <fullName evidence="1">Phosphate-transporting ATPase</fullName>
    </alternativeName>
</protein>
<keyword id="KW-0067">ATP-binding</keyword>
<keyword id="KW-0997">Cell inner membrane</keyword>
<keyword id="KW-1003">Cell membrane</keyword>
<keyword id="KW-0472">Membrane</keyword>
<keyword id="KW-0547">Nucleotide-binding</keyword>
<keyword id="KW-0592">Phosphate transport</keyword>
<keyword id="KW-1185">Reference proteome</keyword>
<keyword id="KW-1278">Translocase</keyword>
<keyword id="KW-0813">Transport</keyword>
<gene>
    <name evidence="1" type="primary">pstB</name>
    <name type="ordered locus">tlr2167</name>
</gene>
<dbReference type="EC" id="7.3.2.1" evidence="1"/>
<dbReference type="EMBL" id="BA000039">
    <property type="protein sequence ID" value="BAC09719.1"/>
    <property type="molecule type" value="Genomic_DNA"/>
</dbReference>
<dbReference type="RefSeq" id="NP_682957.1">
    <property type="nucleotide sequence ID" value="NC_004113.1"/>
</dbReference>
<dbReference type="RefSeq" id="WP_011058001.1">
    <property type="nucleotide sequence ID" value="NC_004113.1"/>
</dbReference>
<dbReference type="SMR" id="Q8DGZ3"/>
<dbReference type="STRING" id="197221.gene:10748778"/>
<dbReference type="EnsemblBacteria" id="BAC09719">
    <property type="protein sequence ID" value="BAC09719"/>
    <property type="gene ID" value="BAC09719"/>
</dbReference>
<dbReference type="KEGG" id="tel:tlr2167"/>
<dbReference type="PATRIC" id="fig|197221.4.peg.2270"/>
<dbReference type="eggNOG" id="COG1117">
    <property type="taxonomic scope" value="Bacteria"/>
</dbReference>
<dbReference type="Proteomes" id="UP000000440">
    <property type="component" value="Chromosome"/>
</dbReference>
<dbReference type="GO" id="GO:0005886">
    <property type="term" value="C:plasma membrane"/>
    <property type="evidence" value="ECO:0007669"/>
    <property type="project" value="UniProtKB-SubCell"/>
</dbReference>
<dbReference type="GO" id="GO:0005524">
    <property type="term" value="F:ATP binding"/>
    <property type="evidence" value="ECO:0007669"/>
    <property type="project" value="UniProtKB-KW"/>
</dbReference>
<dbReference type="GO" id="GO:0016887">
    <property type="term" value="F:ATP hydrolysis activity"/>
    <property type="evidence" value="ECO:0007669"/>
    <property type="project" value="InterPro"/>
</dbReference>
<dbReference type="GO" id="GO:0015415">
    <property type="term" value="F:ATPase-coupled phosphate ion transmembrane transporter activity"/>
    <property type="evidence" value="ECO:0007669"/>
    <property type="project" value="UniProtKB-EC"/>
</dbReference>
<dbReference type="GO" id="GO:0035435">
    <property type="term" value="P:phosphate ion transmembrane transport"/>
    <property type="evidence" value="ECO:0007669"/>
    <property type="project" value="InterPro"/>
</dbReference>
<dbReference type="CDD" id="cd03260">
    <property type="entry name" value="ABC_PstB_phosphate_transporter"/>
    <property type="match status" value="1"/>
</dbReference>
<dbReference type="Gene3D" id="3.40.50.300">
    <property type="entry name" value="P-loop containing nucleotide triphosphate hydrolases"/>
    <property type="match status" value="1"/>
</dbReference>
<dbReference type="InterPro" id="IPR003593">
    <property type="entry name" value="AAA+_ATPase"/>
</dbReference>
<dbReference type="InterPro" id="IPR003439">
    <property type="entry name" value="ABC_transporter-like_ATP-bd"/>
</dbReference>
<dbReference type="InterPro" id="IPR017871">
    <property type="entry name" value="ABC_transporter-like_CS"/>
</dbReference>
<dbReference type="InterPro" id="IPR027417">
    <property type="entry name" value="P-loop_NTPase"/>
</dbReference>
<dbReference type="InterPro" id="IPR005670">
    <property type="entry name" value="PstB-like"/>
</dbReference>
<dbReference type="NCBIfam" id="TIGR00972">
    <property type="entry name" value="3a0107s01c2"/>
    <property type="match status" value="1"/>
</dbReference>
<dbReference type="PANTHER" id="PTHR43423">
    <property type="entry name" value="ABC TRANSPORTER I FAMILY MEMBER 17"/>
    <property type="match status" value="1"/>
</dbReference>
<dbReference type="PANTHER" id="PTHR43423:SF1">
    <property type="entry name" value="ABC TRANSPORTER I FAMILY MEMBER 17"/>
    <property type="match status" value="1"/>
</dbReference>
<dbReference type="Pfam" id="PF00005">
    <property type="entry name" value="ABC_tran"/>
    <property type="match status" value="1"/>
</dbReference>
<dbReference type="SMART" id="SM00382">
    <property type="entry name" value="AAA"/>
    <property type="match status" value="1"/>
</dbReference>
<dbReference type="SUPFAM" id="SSF52540">
    <property type="entry name" value="P-loop containing nucleoside triphosphate hydrolases"/>
    <property type="match status" value="1"/>
</dbReference>
<dbReference type="PROSITE" id="PS00211">
    <property type="entry name" value="ABC_TRANSPORTER_1"/>
    <property type="match status" value="1"/>
</dbReference>
<dbReference type="PROSITE" id="PS50893">
    <property type="entry name" value="ABC_TRANSPORTER_2"/>
    <property type="match status" value="1"/>
</dbReference>
<dbReference type="PROSITE" id="PS51238">
    <property type="entry name" value="PSTB"/>
    <property type="match status" value="1"/>
</dbReference>
<evidence type="ECO:0000255" key="1">
    <source>
        <dbReference type="HAMAP-Rule" id="MF_01702"/>
    </source>
</evidence>
<feature type="chain" id="PRO_0000092913" description="Phosphate import ATP-binding protein PstB">
    <location>
        <begin position="1"/>
        <end position="269"/>
    </location>
</feature>
<feature type="domain" description="ABC transporter" evidence="1">
    <location>
        <begin position="22"/>
        <end position="264"/>
    </location>
</feature>
<feature type="binding site" evidence="1">
    <location>
        <begin position="54"/>
        <end position="61"/>
    </location>
    <ligand>
        <name>ATP</name>
        <dbReference type="ChEBI" id="CHEBI:30616"/>
    </ligand>
</feature>
<proteinExistence type="inferred from homology"/>
<organism>
    <name type="scientific">Thermosynechococcus vestitus (strain NIES-2133 / IAM M-273 / BP-1)</name>
    <dbReference type="NCBI Taxonomy" id="197221"/>
    <lineage>
        <taxon>Bacteria</taxon>
        <taxon>Bacillati</taxon>
        <taxon>Cyanobacteriota</taxon>
        <taxon>Cyanophyceae</taxon>
        <taxon>Acaryochloridales</taxon>
        <taxon>Thermosynechococcaceae</taxon>
        <taxon>Thermosynechococcus</taxon>
    </lineage>
</organism>
<comment type="function">
    <text evidence="1">Part of the ABC transporter complex PstSACB involved in phosphate import. Responsible for energy coupling to the transport system.</text>
</comment>
<comment type="catalytic activity">
    <reaction evidence="1">
        <text>phosphate(out) + ATP + H2O = ADP + 2 phosphate(in) + H(+)</text>
        <dbReference type="Rhea" id="RHEA:24440"/>
        <dbReference type="ChEBI" id="CHEBI:15377"/>
        <dbReference type="ChEBI" id="CHEBI:15378"/>
        <dbReference type="ChEBI" id="CHEBI:30616"/>
        <dbReference type="ChEBI" id="CHEBI:43474"/>
        <dbReference type="ChEBI" id="CHEBI:456216"/>
        <dbReference type="EC" id="7.3.2.1"/>
    </reaction>
</comment>
<comment type="subunit">
    <text evidence="1">The complex is composed of two ATP-binding proteins (PstB), two transmembrane proteins (PstC and PstA) and a solute-binding protein (PstS).</text>
</comment>
<comment type="subcellular location">
    <subcellularLocation>
        <location evidence="1">Cell inner membrane</location>
        <topology evidence="1">Peripheral membrane protein</topology>
    </subcellularLocation>
</comment>
<comment type="similarity">
    <text evidence="1">Belongs to the ABC transporter superfamily. Phosphate importer (TC 3.A.1.7) family.</text>
</comment>
<sequence length="269" mass="30328">MVKQTDQGQGASPTKQPLKKLAEVRDLNFYYGGNKALKNINLPVYEKQVTALIGPSGCGKTTLLRCFNRMHDLYPGNRYEGEIWLGDENPRNLLQMDPIEVRMQIGMVFQKPNPFPKSIYENVAYGLRIRGITNRAVLDEVVERSLRNAALWDEVKDRLKDPGTSLSGGQQQRLCIARALATNPELILFDEPTSALDPIATVSIENLITELKDQVTILIVTHSMQQAIRISQFTAFMYLGELVEYNDTMSIFTKPVQQKTADYVNGRFG</sequence>